<reference key="1">
    <citation type="journal article" date="1993" name="Nucleic Acids Res.">
        <title>Nucleotide sequences of genes 6 and 10 of a bovine group C rotavirus.</title>
        <authorList>
            <person name="Jiang B."/>
            <person name="Tsunemitsu H."/>
            <person name="Gentsch J.R."/>
            <person name="Saif L.J."/>
            <person name="Glass R.I."/>
        </authorList>
    </citation>
    <scope>NUCLEOTIDE SEQUENCE [GENOMIC RNA]</scope>
</reference>
<protein>
    <recommendedName>
        <fullName evidence="1">Non-structural protein 5</fullName>
        <shortName evidence="1">NSP5</shortName>
    </recommendedName>
    <alternativeName>
        <fullName evidence="1">NS26</fullName>
    </alternativeName>
</protein>
<evidence type="ECO:0000255" key="1">
    <source>
        <dbReference type="HAMAP-Rule" id="MF_04092"/>
    </source>
</evidence>
<organismHost>
    <name type="scientific">Bos taurus</name>
    <name type="common">Bovine</name>
    <dbReference type="NCBI Taxonomy" id="9913"/>
</organismHost>
<keyword id="KW-0325">Glycoprotein</keyword>
<keyword id="KW-1035">Host cytoplasm</keyword>
<keyword id="KW-0460">Magnesium</keyword>
<keyword id="KW-0479">Metal-binding</keyword>
<keyword id="KW-0547">Nucleotide-binding</keyword>
<keyword id="KW-0694">RNA-binding</keyword>
<sequence>MSDFGINLDAICDNVRRNSSNSSIKSQVSNRSSRKMDFVDEDELSTYFNSKTSVTQSDSCSNDLNVKHSIIAEAVVCDESAHVSADAVQEKDVVVPKMDESVMKWMMDSHDGICVNGGLNFSKLKNKSNEHETKVTSETNVSAHVSAGINSQLGMFNPIQHKIKKEAIPEMFEDEDTDECTCRNCPYKEKYLKLRKKLKNVLVDIITEM</sequence>
<accession>P34718</accession>
<dbReference type="EMBL" id="L12391">
    <property type="status" value="NOT_ANNOTATED_CDS"/>
    <property type="molecule type" value="Genomic_RNA"/>
</dbReference>
<dbReference type="GO" id="GO:0030430">
    <property type="term" value="C:host cell cytoplasm"/>
    <property type="evidence" value="ECO:0007669"/>
    <property type="project" value="UniProtKB-SubCell"/>
</dbReference>
<dbReference type="GO" id="GO:0016887">
    <property type="term" value="F:ATP hydrolysis activity"/>
    <property type="evidence" value="ECO:0007669"/>
    <property type="project" value="UniProtKB-UniRule"/>
</dbReference>
<dbReference type="GO" id="GO:0000287">
    <property type="term" value="F:magnesium ion binding"/>
    <property type="evidence" value="ECO:0007669"/>
    <property type="project" value="UniProtKB-UniRule"/>
</dbReference>
<dbReference type="GO" id="GO:0000166">
    <property type="term" value="F:nucleotide binding"/>
    <property type="evidence" value="ECO:0007669"/>
    <property type="project" value="UniProtKB-UniRule"/>
</dbReference>
<dbReference type="GO" id="GO:0003723">
    <property type="term" value="F:RNA binding"/>
    <property type="evidence" value="ECO:0007669"/>
    <property type="project" value="UniProtKB-UniRule"/>
</dbReference>
<dbReference type="GO" id="GO:0019079">
    <property type="term" value="P:viral genome replication"/>
    <property type="evidence" value="ECO:0007669"/>
    <property type="project" value="UniProtKB-UniRule"/>
</dbReference>
<dbReference type="HAMAP" id="MF_04092">
    <property type="entry name" value="ROTA_NSP5"/>
    <property type="match status" value="1"/>
</dbReference>
<dbReference type="InterPro" id="IPR002512">
    <property type="entry name" value="Rotavirus_A/C_NSP5"/>
</dbReference>
<dbReference type="Pfam" id="PF01525">
    <property type="entry name" value="Rota_NS26"/>
    <property type="match status" value="1"/>
</dbReference>
<dbReference type="PIRSF" id="PIRSF004006">
    <property type="entry name" value="Rota_NS26"/>
    <property type="match status" value="1"/>
</dbReference>
<organism>
    <name type="scientific">Rotavirus C (isolate RVC/Cow/Japan/Shintoku/1991/G2P[3])</name>
    <name type="common">RV-C</name>
    <dbReference type="NCBI Taxonomy" id="33723"/>
    <lineage>
        <taxon>Viruses</taxon>
        <taxon>Riboviria</taxon>
        <taxon>Orthornavirae</taxon>
        <taxon>Duplornaviricota</taxon>
        <taxon>Resentoviricetes</taxon>
        <taxon>Reovirales</taxon>
        <taxon>Sedoreoviridae</taxon>
        <taxon>Rotavirus</taxon>
        <taxon>Rotavirus C</taxon>
    </lineage>
</organism>
<name>NSP5_ROTBS</name>
<comment type="function">
    <text evidence="1">Plays an essential role in the viral genome replication. Participates, together with NSP2, in the formation of viral factories (viroplasms) which are large inclusions in the host cytoplasm where replication intermediates are assembled and viral RNA replication takes place. Orchestrates the recruitment of viroplasmic proteins such as capsid proteins to these factories.</text>
</comment>
<comment type="cofactor">
    <cofactor evidence="1">
        <name>Mg(2+)</name>
        <dbReference type="ChEBI" id="CHEBI:18420"/>
    </cofactor>
</comment>
<comment type="subunit">
    <text evidence="1">Homodimer. Interacts with VP1. Interacts with VP2. Interacts with NSP2 and NSP6.</text>
</comment>
<comment type="subcellular location">
    <subcellularLocation>
        <location evidence="1">Host cytoplasm</location>
    </subcellularLocation>
    <text evidence="1">Found in spherical cytoplasmic structures, called virus factories, that appear early after infection and are the site of viral replication and packaging.</text>
</comment>
<comment type="PTM">
    <text evidence="1">O-glycosylated.</text>
</comment>
<comment type="similarity">
    <text evidence="1">Belongs to the rotavirus NSP5 family.</text>
</comment>
<proteinExistence type="inferred from homology"/>
<feature type="chain" id="PRO_0000149642" description="Non-structural protein 5">
    <location>
        <begin position="1"/>
        <end position="209"/>
    </location>
</feature>
<feature type="binding site" evidence="1">
    <location>
        <position position="86"/>
    </location>
    <ligand>
        <name>Mg(2+)</name>
        <dbReference type="ChEBI" id="CHEBI:18420"/>
    </ligand>
</feature>